<comment type="function">
    <text evidence="1">Catalyzes the conversion of acetoacetate to acetone and carbon dioxide.</text>
</comment>
<comment type="catalytic activity">
    <reaction evidence="1">
        <text>acetoacetate + H(+) = acetone + CO2</text>
        <dbReference type="Rhea" id="RHEA:19729"/>
        <dbReference type="ChEBI" id="CHEBI:13705"/>
        <dbReference type="ChEBI" id="CHEBI:15347"/>
        <dbReference type="ChEBI" id="CHEBI:15378"/>
        <dbReference type="ChEBI" id="CHEBI:16526"/>
        <dbReference type="EC" id="4.1.1.4"/>
    </reaction>
</comment>
<comment type="similarity">
    <text evidence="1">Belongs to the ADC family.</text>
</comment>
<gene>
    <name evidence="1" type="primary">adc</name>
    <name type="ordered locus">CLL_A2135</name>
</gene>
<reference key="1">
    <citation type="submission" date="2008-04" db="EMBL/GenBank/DDBJ databases">
        <title>Complete sequence of Clostridium botulinum strain Eklund.</title>
        <authorList>
            <person name="Brinkac L.M."/>
            <person name="Brown J.L."/>
            <person name="Bruce D."/>
            <person name="Detter C."/>
            <person name="Munk C."/>
            <person name="Smith L.A."/>
            <person name="Smith T.J."/>
            <person name="Sutton G."/>
            <person name="Brettin T.S."/>
        </authorList>
    </citation>
    <scope>NUCLEOTIDE SEQUENCE [LARGE SCALE GENOMIC DNA]</scope>
    <source>
        <strain>Eklund 17B / Type B</strain>
    </source>
</reference>
<name>ADC_CLOBB</name>
<accession>B2TLN8</accession>
<keyword id="KW-0210">Decarboxylase</keyword>
<keyword id="KW-0456">Lyase</keyword>
<keyword id="KW-0704">Schiff base</keyword>
<evidence type="ECO:0000255" key="1">
    <source>
        <dbReference type="HAMAP-Rule" id="MF_00597"/>
    </source>
</evidence>
<proteinExistence type="inferred from homology"/>
<dbReference type="EC" id="4.1.1.4" evidence="1"/>
<dbReference type="EMBL" id="CP001056">
    <property type="protein sequence ID" value="ACD22518.1"/>
    <property type="molecule type" value="Genomic_DNA"/>
</dbReference>
<dbReference type="SMR" id="B2TLN8"/>
<dbReference type="KEGG" id="cbk:CLL_A2135"/>
<dbReference type="PATRIC" id="fig|935198.13.peg.2090"/>
<dbReference type="HOGENOM" id="CLU_077089_0_0_9"/>
<dbReference type="Proteomes" id="UP000001195">
    <property type="component" value="Chromosome"/>
</dbReference>
<dbReference type="GO" id="GO:0047602">
    <property type="term" value="F:acetoacetate decarboxylase activity"/>
    <property type="evidence" value="ECO:0007669"/>
    <property type="project" value="UniProtKB-UniRule"/>
</dbReference>
<dbReference type="Gene3D" id="2.40.400.10">
    <property type="entry name" value="Acetoacetate decarboxylase-like"/>
    <property type="match status" value="1"/>
</dbReference>
<dbReference type="HAMAP" id="MF_00597">
    <property type="entry name" value="ADC"/>
    <property type="match status" value="1"/>
</dbReference>
<dbReference type="InterPro" id="IPR010451">
    <property type="entry name" value="Acetoacetate_decarboxylase"/>
</dbReference>
<dbReference type="InterPro" id="IPR023653">
    <property type="entry name" value="Acetoacetate_decarboxylase_bac"/>
</dbReference>
<dbReference type="InterPro" id="IPR023375">
    <property type="entry name" value="ADC_dom_sf"/>
</dbReference>
<dbReference type="NCBIfam" id="NF002614">
    <property type="entry name" value="PRK02265.1"/>
    <property type="match status" value="1"/>
</dbReference>
<dbReference type="Pfam" id="PF06314">
    <property type="entry name" value="ADC"/>
    <property type="match status" value="1"/>
</dbReference>
<dbReference type="SUPFAM" id="SSF160104">
    <property type="entry name" value="Acetoacetate decarboxylase-like"/>
    <property type="match status" value="1"/>
</dbReference>
<feature type="chain" id="PRO_1000129879" description="Acetoacetate decarboxylase">
    <location>
        <begin position="1"/>
        <end position="246"/>
    </location>
</feature>
<feature type="active site" description="Schiff-base intermediate with acetoacetate" evidence="1">
    <location>
        <position position="116"/>
    </location>
</feature>
<sequence>MLKSEVSKQITTPLTAPAFPRGPYRFHNREYFNIIYRTDADALRKIVPEPLELGEDPLVRFEMMAMPDTSGLGSYTECGQAIPVSYNGKKGDYLHMMYLDNQPAIAVGRELSAYPKKLGYPKLFVDSDTLVGTLDYGKLRVAIATMGYKHKQLDLNEAKEQICRPNFMLKIIPNYDGTPRICELISAQIKDITVHEAWTGPARLQLFDHAMAPFNDLPVKEIVSSSHILTDLTLPSPEVIYDYLKK</sequence>
<protein>
    <recommendedName>
        <fullName evidence="1">Acetoacetate decarboxylase</fullName>
        <shortName evidence="1">AAD</shortName>
        <shortName evidence="1">ADC</shortName>
        <ecNumber evidence="1">4.1.1.4</ecNumber>
    </recommendedName>
</protein>
<organism>
    <name type="scientific">Clostridium botulinum (strain Eklund 17B / Type B)</name>
    <dbReference type="NCBI Taxonomy" id="935198"/>
    <lineage>
        <taxon>Bacteria</taxon>
        <taxon>Bacillati</taxon>
        <taxon>Bacillota</taxon>
        <taxon>Clostridia</taxon>
        <taxon>Eubacteriales</taxon>
        <taxon>Clostridiaceae</taxon>
        <taxon>Clostridium</taxon>
    </lineage>
</organism>